<keyword id="KW-1003">Cell membrane</keyword>
<keyword id="KW-0169">Cobalamin biosynthesis</keyword>
<keyword id="KW-0472">Membrane</keyword>
<keyword id="KW-1185">Reference proteome</keyword>
<keyword id="KW-0812">Transmembrane</keyword>
<keyword id="KW-1133">Transmembrane helix</keyword>
<dbReference type="EMBL" id="L77117">
    <property type="protein sequence ID" value="AAB99321.1"/>
    <property type="molecule type" value="Genomic_DNA"/>
</dbReference>
<dbReference type="PIR" id="A64464">
    <property type="entry name" value="A64464"/>
</dbReference>
<dbReference type="RefSeq" id="WP_010870831.1">
    <property type="nucleotide sequence ID" value="NC_000909.1"/>
</dbReference>
<dbReference type="FunCoup" id="Q58710">
    <property type="interactions" value="110"/>
</dbReference>
<dbReference type="STRING" id="243232.MJ_1314"/>
<dbReference type="PaxDb" id="243232-MJ_1314"/>
<dbReference type="EnsemblBacteria" id="AAB99321">
    <property type="protein sequence ID" value="AAB99321"/>
    <property type="gene ID" value="MJ_1314"/>
</dbReference>
<dbReference type="GeneID" id="1452216"/>
<dbReference type="KEGG" id="mja:MJ_1314"/>
<dbReference type="eggNOG" id="arCOG04274">
    <property type="taxonomic scope" value="Archaea"/>
</dbReference>
<dbReference type="HOGENOM" id="CLU_054212_0_2_2"/>
<dbReference type="InParanoid" id="Q58710"/>
<dbReference type="OrthoDB" id="46105at2157"/>
<dbReference type="PhylomeDB" id="Q58710"/>
<dbReference type="UniPathway" id="UPA00148"/>
<dbReference type="Proteomes" id="UP000000805">
    <property type="component" value="Chromosome"/>
</dbReference>
<dbReference type="GO" id="GO:0005886">
    <property type="term" value="C:plasma membrane"/>
    <property type="evidence" value="ECO:0007669"/>
    <property type="project" value="UniProtKB-SubCell"/>
</dbReference>
<dbReference type="GO" id="GO:0015420">
    <property type="term" value="F:ABC-type vitamin B12 transporter activity"/>
    <property type="evidence" value="ECO:0007669"/>
    <property type="project" value="UniProtKB-UniRule"/>
</dbReference>
<dbReference type="GO" id="GO:0048472">
    <property type="term" value="F:threonine-phosphate decarboxylase activity"/>
    <property type="evidence" value="ECO:0007669"/>
    <property type="project" value="InterPro"/>
</dbReference>
<dbReference type="GO" id="GO:0009236">
    <property type="term" value="P:cobalamin biosynthetic process"/>
    <property type="evidence" value="ECO:0007669"/>
    <property type="project" value="UniProtKB-UniRule"/>
</dbReference>
<dbReference type="HAMAP" id="MF_00024">
    <property type="entry name" value="CobD_CbiB"/>
    <property type="match status" value="1"/>
</dbReference>
<dbReference type="InterPro" id="IPR004485">
    <property type="entry name" value="Cobalamin_biosynth_CobD/CbiB"/>
</dbReference>
<dbReference type="NCBIfam" id="TIGR00380">
    <property type="entry name" value="cobal_cbiB"/>
    <property type="match status" value="1"/>
</dbReference>
<dbReference type="NCBIfam" id="NF002281">
    <property type="entry name" value="PRK01209.2-5"/>
    <property type="match status" value="1"/>
</dbReference>
<dbReference type="PANTHER" id="PTHR34308">
    <property type="entry name" value="COBALAMIN BIOSYNTHESIS PROTEIN CBIB"/>
    <property type="match status" value="1"/>
</dbReference>
<dbReference type="PANTHER" id="PTHR34308:SF1">
    <property type="entry name" value="COBALAMIN BIOSYNTHESIS PROTEIN CBIB"/>
    <property type="match status" value="1"/>
</dbReference>
<dbReference type="Pfam" id="PF03186">
    <property type="entry name" value="CobD_Cbib"/>
    <property type="match status" value="1"/>
</dbReference>
<reference key="1">
    <citation type="journal article" date="1996" name="Science">
        <title>Complete genome sequence of the methanogenic archaeon, Methanococcus jannaschii.</title>
        <authorList>
            <person name="Bult C.J."/>
            <person name="White O."/>
            <person name="Olsen G.J."/>
            <person name="Zhou L."/>
            <person name="Fleischmann R.D."/>
            <person name="Sutton G.G."/>
            <person name="Blake J.A."/>
            <person name="FitzGerald L.M."/>
            <person name="Clayton R.A."/>
            <person name="Gocayne J.D."/>
            <person name="Kerlavage A.R."/>
            <person name="Dougherty B.A."/>
            <person name="Tomb J.-F."/>
            <person name="Adams M.D."/>
            <person name="Reich C.I."/>
            <person name="Overbeek R."/>
            <person name="Kirkness E.F."/>
            <person name="Weinstock K.G."/>
            <person name="Merrick J.M."/>
            <person name="Glodek A."/>
            <person name="Scott J.L."/>
            <person name="Geoghagen N.S.M."/>
            <person name="Weidman J.F."/>
            <person name="Fuhrmann J.L."/>
            <person name="Nguyen D."/>
            <person name="Utterback T.R."/>
            <person name="Kelley J.M."/>
            <person name="Peterson J.D."/>
            <person name="Sadow P.W."/>
            <person name="Hanna M.C."/>
            <person name="Cotton M.D."/>
            <person name="Roberts K.M."/>
            <person name="Hurst M.A."/>
            <person name="Kaine B.P."/>
            <person name="Borodovsky M."/>
            <person name="Klenk H.-P."/>
            <person name="Fraser C.M."/>
            <person name="Smith H.O."/>
            <person name="Woese C.R."/>
            <person name="Venter J.C."/>
        </authorList>
    </citation>
    <scope>NUCLEOTIDE SEQUENCE [LARGE SCALE GENOMIC DNA]</scope>
    <source>
        <strain>ATCC 43067 / DSM 2661 / JAL-1 / JCM 10045 / NBRC 100440</strain>
    </source>
</reference>
<organism>
    <name type="scientific">Methanocaldococcus jannaschii (strain ATCC 43067 / DSM 2661 / JAL-1 / JCM 10045 / NBRC 100440)</name>
    <name type="common">Methanococcus jannaschii</name>
    <dbReference type="NCBI Taxonomy" id="243232"/>
    <lineage>
        <taxon>Archaea</taxon>
        <taxon>Methanobacteriati</taxon>
        <taxon>Methanobacteriota</taxon>
        <taxon>Methanomada group</taxon>
        <taxon>Methanococci</taxon>
        <taxon>Methanococcales</taxon>
        <taxon>Methanocaldococcaceae</taxon>
        <taxon>Methanocaldococcus</taxon>
    </lineage>
</organism>
<gene>
    <name type="primary">cobD</name>
    <name type="ordered locus">MJ1314</name>
</gene>
<accession>Q58710</accession>
<name>COBD_METJA</name>
<sequence>MLNPIILFLAIIFDRIIGELPESIHPTVWIGKLIAFLENIFKSTNCKNKYRDFLFGSLTTFITLLVVGVIAFFVDKCIMLLPFPLNYIIYGFLLSTTIGYKSLFEFCKKPIEYIKNGDLEGARKAVQHIVSRDASKLDKEHVLSAAVESLSENITDSIIGALFYAIFFGLPGAFVYRAINTLDAMIGYKNEKYLWYGKLAARLDDIANFIPSRIAGILLIITAPFYKGDVKKAIYGFLKEANKVPSPNSGYTMATLANALNITLEKIGYYKLGSGKIDVEKSLNAFKAVDYTVVVFLIIYTLIWWIT</sequence>
<evidence type="ECO:0000250" key="1"/>
<evidence type="ECO:0000255" key="2"/>
<evidence type="ECO:0000305" key="3"/>
<comment type="function">
    <text evidence="1">Converts cobyric acid to cobinamide by the addition of aminopropanol on the F carboxylic group.</text>
</comment>
<comment type="pathway">
    <text>Cofactor biosynthesis; adenosylcobalamin biosynthesis.</text>
</comment>
<comment type="subcellular location">
    <subcellularLocation>
        <location evidence="3">Cell membrane</location>
        <topology evidence="3">Multi-pass membrane protein</topology>
    </subcellularLocation>
</comment>
<comment type="similarity">
    <text evidence="3">Belongs to the CobD/CbiB family.</text>
</comment>
<proteinExistence type="inferred from homology"/>
<feature type="chain" id="PRO_0000150941" description="Probable cobalamin biosynthesis protein CobD">
    <location>
        <begin position="1"/>
        <end position="307"/>
    </location>
</feature>
<feature type="transmembrane region" description="Helical" evidence="2">
    <location>
        <begin position="53"/>
        <end position="73"/>
    </location>
</feature>
<feature type="transmembrane region" description="Helical" evidence="2">
    <location>
        <begin position="78"/>
        <end position="98"/>
    </location>
</feature>
<feature type="transmembrane region" description="Helical" evidence="2">
    <location>
        <begin position="156"/>
        <end position="176"/>
    </location>
</feature>
<feature type="transmembrane region" description="Helical" evidence="2">
    <location>
        <begin position="206"/>
        <end position="226"/>
    </location>
</feature>
<feature type="transmembrane region" description="Helical" evidence="2">
    <location>
        <begin position="286"/>
        <end position="306"/>
    </location>
</feature>
<protein>
    <recommendedName>
        <fullName>Probable cobalamin biosynthesis protein CobD</fullName>
    </recommendedName>
</protein>